<feature type="chain" id="PRO_0000235813" description="Pre-mRNA-splicing factor ISY1 homolog">
    <location>
        <begin position="1"/>
        <end position="285"/>
    </location>
</feature>
<feature type="region of interest" description="Disordered" evidence="2">
    <location>
        <begin position="194"/>
        <end position="244"/>
    </location>
</feature>
<feature type="compositionally biased region" description="Acidic residues" evidence="2">
    <location>
        <begin position="203"/>
        <end position="226"/>
    </location>
</feature>
<feature type="compositionally biased region" description="Basic and acidic residues" evidence="2">
    <location>
        <begin position="227"/>
        <end position="236"/>
    </location>
</feature>
<feature type="modified residue" description="N6-acetyllysine" evidence="14">
    <location>
        <position position="127"/>
    </location>
</feature>
<feature type="modified residue" description="Phosphoserine" evidence="13">
    <location>
        <position position="247"/>
    </location>
</feature>
<feature type="splice variant" id="VSP_039410" description="In isoform 1." evidence="8">
    <original>P</original>
    <variation>RQVRWLMPVIPALWEAEAGGSQA</variation>
    <location>
        <position position="140"/>
    </location>
</feature>
<feature type="splice variant" id="VSP_039411" description="In isoform 2." evidence="7">
    <original>Y</original>
    <variation>CRSGTRPARSGSAPSPRATTAVPMGPSLPTTSPRGAPSCRCLTGLRM</variation>
    <location>
        <position position="285"/>
    </location>
</feature>
<feature type="strand" evidence="15">
    <location>
        <begin position="4"/>
        <end position="7"/>
    </location>
</feature>
<feature type="helix" evidence="15">
    <location>
        <begin position="11"/>
        <end position="18"/>
    </location>
</feature>
<evidence type="ECO:0000250" key="1">
    <source>
        <dbReference type="UniProtKB" id="Q69ZQ2"/>
    </source>
</evidence>
<evidence type="ECO:0000256" key="2">
    <source>
        <dbReference type="SAM" id="MobiDB-lite"/>
    </source>
</evidence>
<evidence type="ECO:0000269" key="3">
    <source>
    </source>
</evidence>
<evidence type="ECO:0000269" key="4">
    <source>
    </source>
</evidence>
<evidence type="ECO:0000269" key="5">
    <source>
    </source>
</evidence>
<evidence type="ECO:0000269" key="6">
    <source>
    </source>
</evidence>
<evidence type="ECO:0000303" key="7">
    <source>
    </source>
</evidence>
<evidence type="ECO:0000303" key="8">
    <source>
    </source>
</evidence>
<evidence type="ECO:0000305" key="9"/>
<evidence type="ECO:0000305" key="10">
    <source>
    </source>
</evidence>
<evidence type="ECO:0000305" key="11">
    <source>
    </source>
</evidence>
<evidence type="ECO:0007744" key="12">
    <source>
        <dbReference type="PDB" id="5YZG"/>
    </source>
</evidence>
<evidence type="ECO:0007744" key="13">
    <source>
    </source>
</evidence>
<evidence type="ECO:0007744" key="14">
    <source>
    </source>
</evidence>
<evidence type="ECO:0007829" key="15">
    <source>
        <dbReference type="PDB" id="6ZYM"/>
    </source>
</evidence>
<proteinExistence type="evidence at protein level"/>
<accession>Q9ULR0</accession>
<accession>Q96IL2</accession>
<accession>Q9BT05</accession>
<comment type="function">
    <text evidence="1 6 10 11">Component of the spliceosome C complex required for the selective processing of microRNAs during embryonic stem cell differentiation (By similarity). Required for the biogenesis of all miRNAs from the pri-miR-17-92 primary transcript except miR-92a (By similarity). Only required for the biogenesis of miR-290 and miR-96 from the pri-miR-290-295 and pri-miR-96-183 primary transcripts, respectively (By similarity). Required during the transition of embryonic stem cells (ESCs) from the naive to primed state (By similarity). By enhancing miRNA biogenesis, promotes exit of ESCs from the naive state to an intermediate state of poised pluripotency, which precedes transition to the primed state (By similarity). Involved in pre-mRNA splicing as component of the spliceosome.</text>
</comment>
<comment type="subunit">
    <text evidence="1 3 4 5 6">Identified in the spliceosome C complex (PubMed:11991638, PubMed:29301961). Component of the XAB2 complex, a multimeric protein complex composed of XAB2, PRPF19, AQR, ZNF830, ISY1, and PPIE (PubMed:17981804). Identified in a pentameric intron-binding (IB) complex composed of AQR, XAB2, ISY1, ZNF830 and PPIE that is incorporated into the spliceosome as a preassembled complex (PubMed:25599396). The IB complex does not contain PRPF19 (PubMed:25599396). Interacts with CPSF3; this interaction is in an RNA independent manner (By similarity). Interacts with the microprocessor complex subunits DGCR8 and DROSHA; this interaction is in an RNA dependent manner (By similarity).</text>
</comment>
<comment type="interaction">
    <interactant intactId="EBI-2557660">
        <id>Q9ULR0</id>
    </interactant>
    <interactant intactId="EBI-2512328">
        <id>O60306</id>
        <label>AQR</label>
    </interactant>
    <organismsDiffer>false</organismsDiffer>
    <experiments>8</experiments>
</comment>
<comment type="interaction">
    <interactant intactId="EBI-2557660">
        <id>Q9ULR0</id>
    </interactant>
    <interactant intactId="EBI-1049597">
        <id>P27797</id>
        <label>CALR</label>
    </interactant>
    <organismsDiffer>false</organismsDiffer>
    <experiments>3</experiments>
</comment>
<comment type="interaction">
    <interactant intactId="EBI-2557660">
        <id>Q9ULR0</id>
    </interactant>
    <interactant intactId="EBI-395261">
        <id>P24863</id>
        <label>CCNC</label>
    </interactant>
    <organismsDiffer>false</organismsDiffer>
    <experiments>3</experiments>
</comment>
<comment type="interaction">
    <interactant intactId="EBI-2557660">
        <id>Q9ULR0</id>
    </interactant>
    <interactant intactId="EBI-2511477">
        <id>Q14562</id>
        <label>DHX8</label>
    </interactant>
    <organismsDiffer>false</organismsDiffer>
    <experiments>4</experiments>
</comment>
<comment type="interaction">
    <interactant intactId="EBI-2557660">
        <id>Q9ULR0</id>
    </interactant>
    <interactant intactId="EBI-351007">
        <id>P36957</id>
        <label>DLST</label>
    </interactant>
    <organismsDiffer>false</organismsDiffer>
    <experiments>3</experiments>
</comment>
<comment type="interaction">
    <interactant intactId="EBI-2557660">
        <id>Q9ULR0</id>
    </interactant>
    <interactant intactId="EBI-742102">
        <id>Q8IYI6</id>
        <label>EXOC8</label>
    </interactant>
    <organismsDiffer>false</organismsDiffer>
    <experiments>3</experiments>
</comment>
<comment type="interaction">
    <interactant intactId="EBI-2557660">
        <id>Q9ULR0</id>
    </interactant>
    <interactant intactId="EBI-6658203">
        <id>Q86YD7</id>
        <label>FAM90A1</label>
    </interactant>
    <organismsDiffer>false</organismsDiffer>
    <experiments>3</experiments>
</comment>
<comment type="interaction">
    <interactant intactId="EBI-2557660">
        <id>Q9ULR0</id>
    </interactant>
    <interactant intactId="EBI-12161375">
        <id>Q8N371-3</id>
        <label>KDM8</label>
    </interactant>
    <organismsDiffer>false</organismsDiffer>
    <experiments>5</experiments>
</comment>
<comment type="interaction">
    <interactant intactId="EBI-2557660">
        <id>Q9ULR0</id>
    </interactant>
    <interactant intactId="EBI-8639312">
        <id>P25800</id>
        <label>LMO1</label>
    </interactant>
    <organismsDiffer>false</organismsDiffer>
    <experiments>3</experiments>
</comment>
<comment type="interaction">
    <interactant intactId="EBI-2557660">
        <id>Q9ULR0</id>
    </interactant>
    <interactant intactId="EBI-11959475">
        <id>P25791-3</id>
        <label>LMO2</label>
    </interactant>
    <organismsDiffer>false</organismsDiffer>
    <experiments>3</experiments>
</comment>
<comment type="interaction">
    <interactant intactId="EBI-2557660">
        <id>Q9ULR0</id>
    </interactant>
    <interactant intactId="EBI-744248">
        <id>P40692</id>
        <label>MLH1</label>
    </interactant>
    <organismsDiffer>false</organismsDiffer>
    <experiments>3</experiments>
</comment>
<comment type="interaction">
    <interactant intactId="EBI-2557660">
        <id>Q9ULR0</id>
    </interactant>
    <interactant intactId="EBI-1055945">
        <id>Q8TDX7</id>
        <label>NEK7</label>
    </interactant>
    <organismsDiffer>false</organismsDiffer>
    <experiments>3</experiments>
</comment>
<comment type="interaction">
    <interactant intactId="EBI-2557660">
        <id>Q9ULR0</id>
    </interactant>
    <interactant intactId="EBI-876439">
        <id>P09661</id>
        <label>SNRPA1</label>
    </interactant>
    <organismsDiffer>false</organismsDiffer>
    <experiments>4</experiments>
</comment>
<comment type="interaction">
    <interactant intactId="EBI-2557660">
        <id>Q9ULR0</id>
    </interactant>
    <interactant intactId="EBI-296151">
        <id>P37173</id>
        <label>TGFBR2</label>
    </interactant>
    <organismsDiffer>false</organismsDiffer>
    <experiments>3</experiments>
</comment>
<comment type="interaction">
    <interactant intactId="EBI-2557660">
        <id>Q9ULR0</id>
    </interactant>
    <interactant intactId="EBI-749248">
        <id>Q8N131</id>
        <label>TMEM123</label>
    </interactant>
    <organismsDiffer>false</organismsDiffer>
    <experiments>3</experiments>
</comment>
<comment type="interaction">
    <interactant intactId="EBI-2557660">
        <id>Q9ULR0</id>
    </interactant>
    <interactant intactId="EBI-295232">
        <id>Q9HCS7</id>
        <label>XAB2</label>
    </interactant>
    <organismsDiffer>false</organismsDiffer>
    <experiments>9</experiments>
</comment>
<comment type="interaction">
    <interactant intactId="EBI-18398632">
        <id>Q9ULR0-1</id>
    </interactant>
    <interactant intactId="EBI-740814">
        <id>Q8N715</id>
        <label>CCDC185</label>
    </interactant>
    <organismsDiffer>false</organismsDiffer>
    <experiments>3</experiments>
</comment>
<comment type="interaction">
    <interactant intactId="EBI-18398632">
        <id>Q9ULR0-1</id>
    </interactant>
    <interactant intactId="EBI-742102">
        <id>Q8IYI6</id>
        <label>EXOC8</label>
    </interactant>
    <organismsDiffer>false</organismsDiffer>
    <experiments>3</experiments>
</comment>
<comment type="interaction">
    <interactant intactId="EBI-18398632">
        <id>Q9ULR0-1</id>
    </interactant>
    <interactant intactId="EBI-7225287">
        <id>Q96MY7</id>
        <label>FAM161B</label>
    </interactant>
    <organismsDiffer>false</organismsDiffer>
    <experiments>3</experiments>
</comment>
<comment type="interaction">
    <interactant intactId="EBI-18398632">
        <id>Q9ULR0-1</id>
    </interactant>
    <interactant intactId="EBI-2513774">
        <id>O95363</id>
        <label>FARS2</label>
    </interactant>
    <organismsDiffer>false</organismsDiffer>
    <experiments>3</experiments>
</comment>
<comment type="interaction">
    <interactant intactId="EBI-18398632">
        <id>Q9ULR0-1</id>
    </interactant>
    <interactant intactId="EBI-12104696">
        <id>Q9H4M3-2</id>
        <label>FBXO44</label>
    </interactant>
    <organismsDiffer>false</organismsDiffer>
    <experiments>3</experiments>
</comment>
<comment type="interaction">
    <interactant intactId="EBI-18398632">
        <id>Q9ULR0-1</id>
    </interactant>
    <interactant intactId="EBI-725515">
        <id>O43559</id>
        <label>FRS3</label>
    </interactant>
    <organismsDiffer>false</organismsDiffer>
    <experiments>3</experiments>
</comment>
<comment type="interaction">
    <interactant intactId="EBI-18398632">
        <id>Q9ULR0-1</id>
    </interactant>
    <interactant intactId="EBI-726510">
        <id>Q96BZ8</id>
        <label>LENG1</label>
    </interactant>
    <organismsDiffer>false</organismsDiffer>
    <experiments>3</experiments>
</comment>
<comment type="interaction">
    <interactant intactId="EBI-18398632">
        <id>Q9ULR0-1</id>
    </interactant>
    <interactant intactId="EBI-744782">
        <id>Q9Y5B8</id>
        <label>NME7</label>
    </interactant>
    <organismsDiffer>false</organismsDiffer>
    <experiments>3</experiments>
</comment>
<comment type="interaction">
    <interactant intactId="EBI-18398632">
        <id>Q9ULR0-1</id>
    </interactant>
    <interactant intactId="EBI-398874">
        <id>Q9UBU9</id>
        <label>NXF1</label>
    </interactant>
    <organismsDiffer>false</organismsDiffer>
    <experiments>3</experiments>
</comment>
<comment type="interaction">
    <interactant intactId="EBI-18398632">
        <id>Q9ULR0-1</id>
    </interactant>
    <interactant intactId="EBI-1504830">
        <id>Q9P2K3-2</id>
        <label>RCOR3</label>
    </interactant>
    <organismsDiffer>false</organismsDiffer>
    <experiments>3</experiments>
</comment>
<comment type="interaction">
    <interactant intactId="EBI-18398632">
        <id>Q9ULR0-1</id>
    </interactant>
    <interactant intactId="EBI-8994397">
        <id>Q5T7W7</id>
        <label>TSTD2</label>
    </interactant>
    <organismsDiffer>false</organismsDiffer>
    <experiments>3</experiments>
</comment>
<comment type="interaction">
    <interactant intactId="EBI-18398632">
        <id>Q9ULR0-1</id>
    </interactant>
    <interactant intactId="EBI-7353612">
        <id>P57075-2</id>
        <label>UBASH3A</label>
    </interactant>
    <organismsDiffer>false</organismsDiffer>
    <experiments>3</experiments>
</comment>
<comment type="interaction">
    <interactant intactId="EBI-18398632">
        <id>Q9ULR0-1</id>
    </interactant>
    <interactant intactId="EBI-6427977">
        <id>Q96SQ5</id>
        <label>ZNF587</label>
    </interactant>
    <organismsDiffer>false</organismsDiffer>
    <experiments>3</experiments>
</comment>
<comment type="interaction">
    <interactant intactId="EBI-18398632">
        <id>Q9ULR0-1</id>
    </interactant>
    <interactant intactId="EBI-9977294">
        <id>Q9UEG4</id>
        <label>ZNF629</label>
    </interactant>
    <organismsDiffer>false</organismsDiffer>
    <experiments>3</experiments>
</comment>
<comment type="subcellular location">
    <subcellularLocation>
        <location evidence="3 5 6">Nucleus</location>
    </subcellularLocation>
</comment>
<comment type="alternative products">
    <event type="alternative splicing"/>
    <isoform>
        <id>Q9ULR0-3</id>
        <name>3</name>
        <sequence type="displayed"/>
    </isoform>
    <isoform>
        <id>Q9ULR0-1</id>
        <name>2</name>
        <name>ISY1-RAB43</name>
        <sequence type="described" ref="VSP_039411"/>
    </isoform>
    <isoform>
        <id>Q9ULR0-2</id>
        <name>1</name>
        <sequence type="described" ref="VSP_039410"/>
    </isoform>
</comment>
<comment type="miscellaneous">
    <molecule>Isoform 2</molecule>
    <text evidence="9">Based on a readthrough transcript which may produce a ISY1-RAB43 fusion protein.</text>
</comment>
<comment type="similarity">
    <text evidence="9">Belongs to the ISY1 family.</text>
</comment>
<comment type="sequence caution" evidence="9">
    <conflict type="erroneous initiation">
        <sequence resource="EMBL-CDS" id="BAA86474"/>
    </conflict>
    <text>Extended N-terminus.</text>
</comment>
<gene>
    <name type="primary">ISY1</name>
    <name type="synonym">KIAA1160</name>
</gene>
<keyword id="KW-0002">3D-structure</keyword>
<keyword id="KW-0007">Acetylation</keyword>
<keyword id="KW-0025">Alternative splicing</keyword>
<keyword id="KW-0507">mRNA processing</keyword>
<keyword id="KW-0508">mRNA splicing</keyword>
<keyword id="KW-0539">Nucleus</keyword>
<keyword id="KW-0597">Phosphoprotein</keyword>
<keyword id="KW-1267">Proteomics identification</keyword>
<keyword id="KW-1185">Reference proteome</keyword>
<keyword id="KW-0747">Spliceosome</keyword>
<dbReference type="EMBL" id="AB032986">
    <property type="protein sequence ID" value="BAA86474.1"/>
    <property type="status" value="ALT_INIT"/>
    <property type="molecule type" value="mRNA"/>
</dbReference>
<dbReference type="EMBL" id="BC004442">
    <property type="protein sequence ID" value="AAH04442.1"/>
    <property type="molecule type" value="mRNA"/>
</dbReference>
<dbReference type="EMBL" id="BC007409">
    <property type="protein sequence ID" value="AAH07409.1"/>
    <property type="molecule type" value="mRNA"/>
</dbReference>
<dbReference type="EMBL" id="BC019849">
    <property type="protein sequence ID" value="AAH19849.1"/>
    <property type="molecule type" value="mRNA"/>
</dbReference>
<dbReference type="CCDS" id="CCDS43149.1">
    <molecule id="Q9ULR0-3"/>
</dbReference>
<dbReference type="CCDS" id="CCDS56277.1">
    <molecule id="Q9ULR0-2"/>
</dbReference>
<dbReference type="RefSeq" id="NP_001186398.1">
    <molecule id="Q9ULR0-2"/>
    <property type="nucleotide sequence ID" value="NM_001199469.2"/>
</dbReference>
<dbReference type="RefSeq" id="NP_001191819.1">
    <molecule id="Q9ULR0-1"/>
    <property type="nucleotide sequence ID" value="NM_001204890.1"/>
</dbReference>
<dbReference type="RefSeq" id="NP_065752.1">
    <molecule id="Q9ULR0-3"/>
    <property type="nucleotide sequence ID" value="NM_020701.4"/>
</dbReference>
<dbReference type="PDB" id="5YZG">
    <property type="method" value="EM"/>
    <property type="resolution" value="4.10 A"/>
    <property type="chains" value="y=1-285"/>
</dbReference>
<dbReference type="PDB" id="6FF7">
    <property type="method" value="EM"/>
    <property type="resolution" value="4.50 A"/>
    <property type="chains" value="w=1-285"/>
</dbReference>
<dbReference type="PDB" id="6ZYM">
    <property type="method" value="EM"/>
    <property type="resolution" value="3.40 A"/>
    <property type="chains" value="s=1-285"/>
</dbReference>
<dbReference type="PDB" id="7A5P">
    <property type="method" value="EM"/>
    <property type="resolution" value="5.00 A"/>
    <property type="chains" value="s=1-285"/>
</dbReference>
<dbReference type="PDB" id="8C6J">
    <property type="method" value="EM"/>
    <property type="resolution" value="2.80 A"/>
    <property type="chains" value="CI=1-285"/>
</dbReference>
<dbReference type="PDB" id="8CH6">
    <property type="method" value="EM"/>
    <property type="resolution" value="5.90 A"/>
    <property type="chains" value="t=1-285"/>
</dbReference>
<dbReference type="PDB" id="8I0W">
    <property type="method" value="EM"/>
    <property type="resolution" value="3.40 A"/>
    <property type="chains" value="z=1-285"/>
</dbReference>
<dbReference type="PDB" id="8RO2">
    <property type="method" value="EM"/>
    <property type="resolution" value="3.50 A"/>
    <property type="chains" value="D=1-285"/>
</dbReference>
<dbReference type="PDB" id="9FMD">
    <property type="method" value="EM"/>
    <property type="resolution" value="3.30 A"/>
    <property type="chains" value="D=1-285"/>
</dbReference>
<dbReference type="PDBsum" id="5YZG"/>
<dbReference type="PDBsum" id="6FF7"/>
<dbReference type="PDBsum" id="6ZYM"/>
<dbReference type="PDBsum" id="7A5P"/>
<dbReference type="PDBsum" id="8C6J"/>
<dbReference type="PDBsum" id="8CH6"/>
<dbReference type="PDBsum" id="8I0W"/>
<dbReference type="PDBsum" id="8RO2"/>
<dbReference type="PDBsum" id="9FMD"/>
<dbReference type="EMDB" id="EMD-11569"/>
<dbReference type="EMDB" id="EMD-16452"/>
<dbReference type="EMDB" id="EMD-16658"/>
<dbReference type="EMDB" id="EMD-19399"/>
<dbReference type="EMDB" id="EMD-35113"/>
<dbReference type="EMDB" id="EMD-6864"/>
<dbReference type="SMR" id="Q9ULR0"/>
<dbReference type="BioGRID" id="121531">
    <property type="interactions" value="145"/>
</dbReference>
<dbReference type="BioGRID" id="1529628">
    <property type="interactions" value="38"/>
</dbReference>
<dbReference type="ComplexPortal" id="CPX-8065">
    <property type="entry name" value="Intron-binding complex"/>
</dbReference>
<dbReference type="CORUM" id="Q9ULR0"/>
<dbReference type="DIP" id="DIP-56636N"/>
<dbReference type="FunCoup" id="Q9ULR0">
    <property type="interactions" value="3067"/>
</dbReference>
<dbReference type="IntAct" id="Q9ULR0">
    <property type="interactions" value="117"/>
</dbReference>
<dbReference type="MINT" id="Q9ULR0"/>
<dbReference type="STRING" id="9606.ENSP00000411822"/>
<dbReference type="iPTMnet" id="Q9ULR0"/>
<dbReference type="PhosphoSitePlus" id="Q9ULR0"/>
<dbReference type="BioMuta" id="ISY1"/>
<dbReference type="DMDM" id="300669687"/>
<dbReference type="jPOST" id="Q9ULR0"/>
<dbReference type="MassIVE" id="Q9ULR0"/>
<dbReference type="PaxDb" id="9606-ENSP00000411822"/>
<dbReference type="PeptideAtlas" id="Q9ULR0"/>
<dbReference type="ProteomicsDB" id="85097">
    <molecule id="Q9ULR0-3"/>
</dbReference>
<dbReference type="ProteomicsDB" id="85098">
    <molecule id="Q9ULR0-1"/>
</dbReference>
<dbReference type="ProteomicsDB" id="85099">
    <molecule id="Q9ULR0-2"/>
</dbReference>
<dbReference type="Pumba" id="Q9ULR0"/>
<dbReference type="Antibodypedia" id="34841">
    <property type="antibodies" value="45 antibodies from 13 providers"/>
</dbReference>
<dbReference type="DNASU" id="57461"/>
<dbReference type="Ensembl" id="ENST00000273541.12">
    <molecule id="Q9ULR0-2"/>
    <property type="protein sequence ID" value="ENSP00000273541.8"/>
    <property type="gene ID" value="ENSG00000240682.10"/>
</dbReference>
<dbReference type="Ensembl" id="ENST00000393295.8">
    <molecule id="Q9ULR0-3"/>
    <property type="protein sequence ID" value="ENSP00000376973.4"/>
    <property type="gene ID" value="ENSG00000240682.10"/>
</dbReference>
<dbReference type="GeneID" id="100534599"/>
<dbReference type="GeneID" id="57461"/>
<dbReference type="KEGG" id="hsa:100534599"/>
<dbReference type="KEGG" id="hsa:57461"/>
<dbReference type="MANE-Select" id="ENST00000393295.8">
    <property type="protein sequence ID" value="ENSP00000376973.4"/>
    <property type="RefSeq nucleotide sequence ID" value="NM_020701.4"/>
    <property type="RefSeq protein sequence ID" value="NP_065752.1"/>
</dbReference>
<dbReference type="UCSC" id="uc003elp.3">
    <molecule id="Q9ULR0-3"/>
    <property type="organism name" value="human"/>
</dbReference>
<dbReference type="AGR" id="HGNC:29201"/>
<dbReference type="AGR" id="HGNC:42969"/>
<dbReference type="CTD" id="100534599"/>
<dbReference type="CTD" id="57461"/>
<dbReference type="DisGeNET" id="57461"/>
<dbReference type="GeneCards" id="ISY1"/>
<dbReference type="HGNC" id="HGNC:29201">
    <property type="gene designation" value="ISY1"/>
</dbReference>
<dbReference type="HPA" id="ENSG00000240682">
    <property type="expression patterns" value="Low tissue specificity"/>
</dbReference>
<dbReference type="MIM" id="612764">
    <property type="type" value="gene"/>
</dbReference>
<dbReference type="neXtProt" id="NX_Q9ULR0"/>
<dbReference type="OpenTargets" id="ENSG00000240682"/>
<dbReference type="OpenTargets" id="ENSG00000261796"/>
<dbReference type="PharmGKB" id="PA162392343"/>
<dbReference type="VEuPathDB" id="HostDB:ENSG00000240682"/>
<dbReference type="eggNOG" id="KOG3068">
    <property type="taxonomic scope" value="Eukaryota"/>
</dbReference>
<dbReference type="GeneTree" id="ENSGT00390000014109"/>
<dbReference type="HOGENOM" id="CLU_043453_0_0_1"/>
<dbReference type="InParanoid" id="Q9ULR0"/>
<dbReference type="OMA" id="YHWERRI"/>
<dbReference type="OrthoDB" id="1739576at2759"/>
<dbReference type="PAN-GO" id="Q9ULR0">
    <property type="GO annotations" value="6 GO annotations based on evolutionary models"/>
</dbReference>
<dbReference type="PhylomeDB" id="Q9ULR0"/>
<dbReference type="TreeFam" id="TF105841"/>
<dbReference type="PathwayCommons" id="Q9ULR0"/>
<dbReference type="Reactome" id="R-HSA-6781823">
    <property type="pathway name" value="Formation of TC-NER Pre-Incision Complex"/>
</dbReference>
<dbReference type="Reactome" id="R-HSA-6781827">
    <property type="pathway name" value="Transcription-Coupled Nucleotide Excision Repair (TC-NER)"/>
</dbReference>
<dbReference type="Reactome" id="R-HSA-6782135">
    <property type="pathway name" value="Dual incision in TC-NER"/>
</dbReference>
<dbReference type="Reactome" id="R-HSA-6782210">
    <property type="pathway name" value="Gap-filling DNA repair synthesis and ligation in TC-NER"/>
</dbReference>
<dbReference type="Reactome" id="R-HSA-72163">
    <property type="pathway name" value="mRNA Splicing - Major Pathway"/>
</dbReference>
<dbReference type="SignaLink" id="Q9ULR0"/>
<dbReference type="BioGRID-ORCS" id="100534599">
    <property type="hits" value="181 hits in 656 CRISPR screens"/>
</dbReference>
<dbReference type="BioGRID-ORCS" id="57461">
    <property type="hits" value="682 hits in 1062 CRISPR screens"/>
</dbReference>
<dbReference type="Pharos" id="Q9ULR0">
    <property type="development level" value="Tdark"/>
</dbReference>
<dbReference type="PRO" id="PR:Q9ULR0"/>
<dbReference type="Proteomes" id="UP000005640">
    <property type="component" value="Chromosome 3"/>
</dbReference>
<dbReference type="RNAct" id="Q9ULR0">
    <property type="molecule type" value="protein"/>
</dbReference>
<dbReference type="Bgee" id="ENSG00000240682">
    <property type="expression patterns" value="Expressed in calcaneal tendon and 185 other cell types or tissues"/>
</dbReference>
<dbReference type="ExpressionAtlas" id="Q9ULR0">
    <property type="expression patterns" value="baseline and differential"/>
</dbReference>
<dbReference type="GO" id="GO:0071013">
    <property type="term" value="C:catalytic step 2 spliceosome"/>
    <property type="evidence" value="ECO:0000314"/>
    <property type="project" value="UniProtKB"/>
</dbReference>
<dbReference type="GO" id="GO:0005654">
    <property type="term" value="C:nucleoplasm"/>
    <property type="evidence" value="ECO:0000304"/>
    <property type="project" value="Reactome"/>
</dbReference>
<dbReference type="GO" id="GO:0005634">
    <property type="term" value="C:nucleus"/>
    <property type="evidence" value="ECO:0000314"/>
    <property type="project" value="UniProtKB"/>
</dbReference>
<dbReference type="GO" id="GO:0071014">
    <property type="term" value="C:post-mRNA release spliceosomal complex"/>
    <property type="evidence" value="ECO:0000318"/>
    <property type="project" value="GO_Central"/>
</dbReference>
<dbReference type="GO" id="GO:0071020">
    <property type="term" value="C:post-spliceosomal complex"/>
    <property type="evidence" value="ECO:0000318"/>
    <property type="project" value="GO_Central"/>
</dbReference>
<dbReference type="GO" id="GO:0000974">
    <property type="term" value="C:Prp19 complex"/>
    <property type="evidence" value="ECO:0000318"/>
    <property type="project" value="GO_Central"/>
</dbReference>
<dbReference type="GO" id="GO:0071006">
    <property type="term" value="C:U2-type catalytic step 1 spliceosome"/>
    <property type="evidence" value="ECO:0000314"/>
    <property type="project" value="UniProtKB"/>
</dbReference>
<dbReference type="GO" id="GO:0003723">
    <property type="term" value="F:RNA binding"/>
    <property type="evidence" value="ECO:0007005"/>
    <property type="project" value="UniProtKB"/>
</dbReference>
<dbReference type="GO" id="GO:0000350">
    <property type="term" value="P:generation of catalytic spliceosome for second transesterification step"/>
    <property type="evidence" value="ECO:0000318"/>
    <property type="project" value="GO_Central"/>
</dbReference>
<dbReference type="GO" id="GO:0000389">
    <property type="term" value="P:mRNA 3'-splice site recognition"/>
    <property type="evidence" value="ECO:0000318"/>
    <property type="project" value="GO_Central"/>
</dbReference>
<dbReference type="GO" id="GO:0000398">
    <property type="term" value="P:mRNA splicing, via spliceosome"/>
    <property type="evidence" value="ECO:0000314"/>
    <property type="project" value="UniProtKB"/>
</dbReference>
<dbReference type="FunFam" id="1.10.287.660:FF:000001">
    <property type="entry name" value="pre-mRNA-splicing factor ISY1 homolog"/>
    <property type="match status" value="1"/>
</dbReference>
<dbReference type="Gene3D" id="1.10.287.660">
    <property type="entry name" value="Helix hairpin bin"/>
    <property type="match status" value="1"/>
</dbReference>
<dbReference type="InterPro" id="IPR029012">
    <property type="entry name" value="Helix_hairpin_bin_sf"/>
</dbReference>
<dbReference type="InterPro" id="IPR009360">
    <property type="entry name" value="Isy1"/>
</dbReference>
<dbReference type="InterPro" id="IPR037200">
    <property type="entry name" value="Isy1_sf"/>
</dbReference>
<dbReference type="PANTHER" id="PTHR13021">
    <property type="entry name" value="PRE-MRNA-SPLICING FACTOR ISY1"/>
    <property type="match status" value="1"/>
</dbReference>
<dbReference type="Pfam" id="PF06246">
    <property type="entry name" value="Isy1"/>
    <property type="match status" value="1"/>
</dbReference>
<dbReference type="SUPFAM" id="SSF140102">
    <property type="entry name" value="ISY1 domain-like"/>
    <property type="match status" value="1"/>
</dbReference>
<organism>
    <name type="scientific">Homo sapiens</name>
    <name type="common">Human</name>
    <dbReference type="NCBI Taxonomy" id="9606"/>
    <lineage>
        <taxon>Eukaryota</taxon>
        <taxon>Metazoa</taxon>
        <taxon>Chordata</taxon>
        <taxon>Craniata</taxon>
        <taxon>Vertebrata</taxon>
        <taxon>Euteleostomi</taxon>
        <taxon>Mammalia</taxon>
        <taxon>Eutheria</taxon>
        <taxon>Euarchontoglires</taxon>
        <taxon>Primates</taxon>
        <taxon>Haplorrhini</taxon>
        <taxon>Catarrhini</taxon>
        <taxon>Hominidae</taxon>
        <taxon>Homo</taxon>
    </lineage>
</organism>
<sequence length="285" mass="32992">MARNAEKAMTALARFRQAQLEEGKVKERRPFLASECTELPKAEKWRRQIIGEISKKVAQIQNAGLGEFRIRDLNDEINKLLREKGHWEVRIKELGGPDYGKVGPKMLDHEGKEVPGNRGYKYFGAAKDLPGVRELFEKEPLPPPRKTRAELMKAIDFEYYGYLDEDDGVIVPLEQEYEKKLRAELVEKWKAEREARLARGEKEEEEEEEEEINIYAVTEEESDEEGSQEKGGDDSQQKFIAHVPVPSQQEIEEALVRRKKMELLQKYASETLQAQSEEARRLLGY</sequence>
<reference key="1">
    <citation type="journal article" date="1999" name="DNA Res.">
        <title>Characterization of cDNA clones selected by the GeneMark analysis from size-fractionated cDNA libraries from human brain.</title>
        <authorList>
            <person name="Hirosawa M."/>
            <person name="Nagase T."/>
            <person name="Ishikawa K."/>
            <person name="Kikuno R."/>
            <person name="Nomura N."/>
            <person name="Ohara O."/>
        </authorList>
    </citation>
    <scope>NUCLEOTIDE SEQUENCE [LARGE SCALE MRNA] (ISOFORM 2)</scope>
    <source>
        <tissue>Brain</tissue>
    </source>
</reference>
<reference key="2">
    <citation type="journal article" date="2004" name="Genome Res.">
        <title>The status, quality, and expansion of the NIH full-length cDNA project: the Mammalian Gene Collection (MGC).</title>
        <authorList>
            <consortium name="The MGC Project Team"/>
        </authorList>
    </citation>
    <scope>NUCLEOTIDE SEQUENCE [LARGE SCALE MRNA] (ISOFORMS 1 AND 3)</scope>
    <source>
        <tissue>Lung</tissue>
        <tissue>Ovary</tissue>
        <tissue>Testis</tissue>
    </source>
</reference>
<reference key="3">
    <citation type="journal article" date="2002" name="RNA">
        <title>Purification and characterization of native spliceosomes suitable for three-dimensional structural analysis.</title>
        <authorList>
            <person name="Jurica M.S."/>
            <person name="Licklider L.J."/>
            <person name="Gygi S.P."/>
            <person name="Grigorieff N."/>
            <person name="Moore M.J."/>
        </authorList>
    </citation>
    <scope>IDENTIFICATION BY MASS SPECTROMETRY</scope>
    <scope>IDENTIFICATION IN THE SPLICEOSOMAL C COMPLEX</scope>
    <scope>SUBCELLULAR LOCATION</scope>
    <scope>FUNCTION</scope>
</reference>
<reference key="4">
    <citation type="journal article" date="2007" name="Science">
        <title>ATM and ATR substrate analysis reveals extensive protein networks responsive to DNA damage.</title>
        <authorList>
            <person name="Matsuoka S."/>
            <person name="Ballif B.A."/>
            <person name="Smogorzewska A."/>
            <person name="McDonald E.R. III"/>
            <person name="Hurov K.E."/>
            <person name="Luo J."/>
            <person name="Bakalarski C.E."/>
            <person name="Zhao Z."/>
            <person name="Solimini N."/>
            <person name="Lerenthal Y."/>
            <person name="Shiloh Y."/>
            <person name="Gygi S.P."/>
            <person name="Elledge S.J."/>
        </authorList>
    </citation>
    <scope>PHOSPHORYLATION [LARGE SCALE ANALYSIS] AT SER-247</scope>
    <scope>IDENTIFICATION BY MASS SPECTROMETRY [LARGE SCALE ANALYSIS]</scope>
    <source>
        <tissue>Embryonic kidney</tissue>
    </source>
</reference>
<reference key="5">
    <citation type="journal article" date="2008" name="J. Biol. Chem.">
        <title>Isolation of XAB2 complex involved in pre-mRNA splicing, transcription, and transcription-coupled repair.</title>
        <authorList>
            <person name="Kuraoka I."/>
            <person name="Ito S."/>
            <person name="Wada T."/>
            <person name="Hayashida M."/>
            <person name="Lee L."/>
            <person name="Saijo M."/>
            <person name="Nakatsu Y."/>
            <person name="Matsumoto M."/>
            <person name="Matsunaga T."/>
            <person name="Handa H."/>
            <person name="Qin J."/>
            <person name="Nakatani Y."/>
            <person name="Tanaka K."/>
        </authorList>
    </citation>
    <scope>IDENTIFICATION AS PART OF THE XAB2 COMPLEX</scope>
</reference>
<reference key="6">
    <citation type="journal article" date="2009" name="Science">
        <title>Lysine acetylation targets protein complexes and co-regulates major cellular functions.</title>
        <authorList>
            <person name="Choudhary C."/>
            <person name="Kumar C."/>
            <person name="Gnad F."/>
            <person name="Nielsen M.L."/>
            <person name="Rehman M."/>
            <person name="Walther T.C."/>
            <person name="Olsen J.V."/>
            <person name="Mann M."/>
        </authorList>
    </citation>
    <scope>ACETYLATION [LARGE SCALE ANALYSIS] AT LYS-127</scope>
    <scope>IDENTIFICATION BY MASS SPECTROMETRY [LARGE SCALE ANALYSIS]</scope>
</reference>
<reference key="7">
    <citation type="journal article" date="2011" name="BMC Syst. Biol.">
        <title>Initial characterization of the human central proteome.</title>
        <authorList>
            <person name="Burkard T.R."/>
            <person name="Planyavsky M."/>
            <person name="Kaupe I."/>
            <person name="Breitwieser F.P."/>
            <person name="Buerckstuemmer T."/>
            <person name="Bennett K.L."/>
            <person name="Superti-Furga G."/>
            <person name="Colinge J."/>
        </authorList>
    </citation>
    <scope>IDENTIFICATION BY MASS SPECTROMETRY [LARGE SCALE ANALYSIS]</scope>
</reference>
<reference key="8">
    <citation type="journal article" date="2011" name="Sci. Signal.">
        <title>System-wide temporal characterization of the proteome and phosphoproteome of human embryonic stem cell differentiation.</title>
        <authorList>
            <person name="Rigbolt K.T."/>
            <person name="Prokhorova T.A."/>
            <person name="Akimov V."/>
            <person name="Henningsen J."/>
            <person name="Johansen P.T."/>
            <person name="Kratchmarova I."/>
            <person name="Kassem M."/>
            <person name="Mann M."/>
            <person name="Olsen J.V."/>
            <person name="Blagoev B."/>
        </authorList>
    </citation>
    <scope>IDENTIFICATION BY MASS SPECTROMETRY [LARGE SCALE ANALYSIS]</scope>
</reference>
<reference key="9">
    <citation type="journal article" date="2015" name="Nat. Struct. Mol. Biol.">
        <title>The RNA helicase Aquarius exhibits structural adaptations mediating its recruitment to spliceosomes.</title>
        <authorList>
            <person name="De I."/>
            <person name="Bessonov S."/>
            <person name="Hofele R."/>
            <person name="dos Santos K."/>
            <person name="Will C.L."/>
            <person name="Urlaub H."/>
            <person name="Luhrmann R."/>
            <person name="Pena V."/>
        </authorList>
    </citation>
    <scope>IDENTIFICATION BY MASS SPECTROMETRY</scope>
    <scope>IDENTIFICATION IN THE IB COMPLEX</scope>
    <scope>FUNCTION</scope>
    <scope>SUBUNIT</scope>
    <scope>SUBCELLULAR LOCATION</scope>
</reference>
<reference evidence="12" key="10">
    <citation type="journal article" date="2018" name="Science">
        <title>Structure of a human catalytic step I spliceosome.</title>
        <authorList>
            <person name="Zhan X."/>
            <person name="Yan C."/>
            <person name="Zhang X."/>
            <person name="Lei J."/>
            <person name="Shi Y."/>
        </authorList>
    </citation>
    <scope>STRUCTURE BY ELECTRON MICROSCOPY (4.10 ANGSTROMS)</scope>
    <scope>FUNCTION</scope>
    <scope>SUBUNIT</scope>
    <scope>SUBCELLULAR LOCATION</scope>
</reference>
<protein>
    <recommendedName>
        <fullName>Pre-mRNA-splicing factor ISY1 homolog</fullName>
    </recommendedName>
</protein>
<name>ISY1_HUMAN</name>